<proteinExistence type="evidence at protein level"/>
<name>TAT_HV112</name>
<accession>P04326</accession>
<organism>
    <name type="scientific">Human immunodeficiency virus type 1 group M subtype B (isolate PCV12)</name>
    <name type="common">HIV-1</name>
    <dbReference type="NCBI Taxonomy" id="11679"/>
    <lineage>
        <taxon>Viruses</taxon>
        <taxon>Riboviria</taxon>
        <taxon>Pararnavirae</taxon>
        <taxon>Artverviricota</taxon>
        <taxon>Revtraviricetes</taxon>
        <taxon>Ortervirales</taxon>
        <taxon>Retroviridae</taxon>
        <taxon>Orthoretrovirinae</taxon>
        <taxon>Lentivirus</taxon>
        <taxon>Human immunodeficiency virus type 1</taxon>
    </lineage>
</organism>
<protein>
    <recommendedName>
        <fullName evidence="1">Protein Tat</fullName>
    </recommendedName>
    <alternativeName>
        <fullName evidence="1">Transactivating regulatory protein</fullName>
    </alternativeName>
</protein>
<gene>
    <name evidence="1" type="primary">tat</name>
</gene>
<comment type="function">
    <text evidence="1">Transcriptional activator that increases RNA Pol II processivity, thereby increasing the level of full-length viral transcripts. Recognizes a hairpin structure at the 5'-LTR of the nascent viral mRNAs referred to as the transactivation responsive RNA element (TAR) and recruits the cyclin T1-CDK9 complex (P-TEFb complex) that will in turn hyperphosphorylate the RNA polymerase II to allow efficient elongation. The CDK9 component of P-TEFb and other Tat-activated kinases hyperphosphorylate the C-terminus of RNA Pol II that becomes stabilized and much more processive. Other factors such as HTATSF1/Tat-SF1, SUPT5H/SPT5, and HTATIP2 are also important for Tat's function. Besides its effect on RNA Pol II processivity, Tat induces chromatin remodeling of proviral genes by recruiting the histone acetyltransferases (HATs) CREBBP, EP300 and PCAF to the chromatin. This also contributes to the increase in proviral transcription rate, especially when the provirus integrates in transcriptionally silent region of the host genome. To ensure maximal activation of the LTR, Tat mediates nuclear translocation of NF-kappa-B by interacting with host RELA. Through its interaction with host TBP, Tat may also modulate transcription initiation. Tat can reactivate a latently infected cell by penetrating in it and transactivating its LTR promoter. In the cytoplasm, Tat is thought to act as a translational activator of HIV-1 mRNAs.</text>
</comment>
<comment type="function">
    <text evidence="1">Extracellular circulating Tat can be endocytosed by surrounding uninfected cells via the binding to several surface receptors such as CD26, CXCR4, heparan sulfate proteoglycans (HSPG) or LDLR. Neurons are rarely infected, but they internalize Tat via their LDLR. Through its interaction with nuclear HATs, Tat is potentially able to control the acetylation-dependent cellular gene expression. Modulates the expression of many cellular genes involved in cell survival, proliferation or in coding for cytokines or cytokine receptors. Tat plays a role in T-cell and neurons apoptosis. Tat induced neurotoxicity and apoptosis probably contribute to neuroAIDS. Circulating Tat also acts as a chemokine-like and/or growth factor-like molecule that binds to specific receptors on the surface of the cells, affecting many cellular pathways. In the vascular system, Tat binds to ITGAV/ITGB3 and ITGA5/ITGB1 integrins dimers at the surface of endothelial cells and competes with bFGF for heparin-binding sites, leading to an excess of soluble bFGF.</text>
</comment>
<comment type="subunit">
    <text evidence="1">Interacts with host CCNT1. Associates with the P-TEFb complex composed at least of Tat, P-TEFb (CDK9 and CCNT1), TAR RNA, RNA Pol II. Recruits the HATs CREBBP, TAF1/TFIID, EP300, PCAF and GCN5L2. Interacts with host KAT5/Tip60; this interaction targets the latter to degradation. Interacts with the host deacetylase SIRT1. Interacts with host capping enzyme RNGTT; this interaction stimulates RNGTT. Binds to host KDR, and to the host integrins ITGAV/ITGB3 and ITGA5/ITGB1. Interacts with host KPNB1/importin beta-1 without previous binding to KPNA1/importin alpha-1. Interacts with EIF2AK2. Interacts with host nucleosome assembly protein NAP1L1; this interaction may be required for the transport of Tat within the nucleus, since the two proteins interact at the nuclear rim. Interacts with host C1QBP/SF2P32; this interaction involves lysine-acetylated Tat. Interacts with the host chemokine receptors CCR2, CCR3 and CXCR4. Interacts with host DPP4/CD26; this interaction may trigger an anti-proliferative effect. Interacts with host LDLR. Interacts with the host extracellular matrix metalloproteinase MMP1. Interacts with host PRMT6; this interaction mediates Tat's methylation. Interacts with, and is ubiquitinated by MDM2/Hdm2. Interacts with host PSMC3 and HTATIP2. Interacts with STAB1; this interaction may overcome SATB1-mediated repression of IL2 and IL2RA (interleukin) in T cells by binding to the same domain than HDAC1. Interacts (when acetylated) with human CDK13, thereby increasing HIV-1 mRNA splicing and promoting the production of the doubly spliced HIV-1 protein Nef. Interacts with host TBP; this interaction modulates the activity of transcriptional pre-initiation complex. Interacts with host RELA. Interacts with host PLSCR1; this interaction negatively regulates Tat transactivation activity by altering its subcellular distribution.</text>
</comment>
<comment type="interaction">
    <interactant intactId="EBI-7333987">
        <id>P04326</id>
    </interactant>
    <interactant intactId="EBI-679562">
        <id>P51531</id>
        <label>SMARCA2</label>
    </interactant>
    <organismsDiffer>true</organismsDiffer>
    <experiments>8</experiments>
</comment>
<comment type="interaction">
    <interactant intactId="EBI-7333987">
        <id>P04326</id>
    </interactant>
    <interactant intactId="EBI-358419">
        <id>Q12824</id>
        <label>SMARCB1</label>
    </interactant>
    <organismsDiffer>true</organismsDiffer>
    <experiments>3</experiments>
</comment>
<comment type="subcellular location">
    <subcellularLocation>
        <location evidence="1">Host nucleus</location>
        <location evidence="1">Host nucleolus</location>
    </subcellularLocation>
    <subcellularLocation>
        <location evidence="1">Host cytoplasm</location>
    </subcellularLocation>
    <subcellularLocation>
        <location evidence="1">Secreted</location>
    </subcellularLocation>
    <text evidence="1">Probably localizes to both nuclear and nucleolar compartments. Nuclear localization is mediated through the interaction of the nuclear localization signal with importin KPNB1. Secretion occurs through a Golgi-independent pathway. Tat is released from infected cells to the extracellular space where it remains associated to the cell membrane, or is secreted into the cerebrospinal fluid and sera. Extracellular Tat can be endocytosed by surrounding uninfected cells via binding to several receptors depending on the cell type.</text>
</comment>
<comment type="alternative products">
    <event type="alternative splicing"/>
    <isoform>
        <id>P04326-1</id>
        <name>Long</name>
        <sequence type="displayed"/>
    </isoform>
    <isoform>
        <id>P04326-2</id>
        <name>Short</name>
        <sequence type="described" ref="VSP_022421"/>
    </isoform>
</comment>
<comment type="domain">
    <text evidence="1">The cell attachment site mediates the interaction with ITGAV/ITGB3 and ITGA5/ITGB1 integrins, leading to vascular cell migration and invasion. This interaction also provides endothelial cells with the adhesion signal they require to grow in response to mitogens.</text>
</comment>
<comment type="domain">
    <text evidence="1">The Cys-rich region may bind 2 zinc ions. This region is involved in binding to KAT5.</text>
</comment>
<comment type="domain">
    <text evidence="1">The transactivation domain mediates the interaction with CCNT1, GCN5L2, and MDM2.</text>
</comment>
<comment type="domain">
    <text>The Arg-rich RNA-binding region binds the TAR RNA. This region also mediates the nuclear localization through direct binding to KPNB1 and is involved in Tat's transfer across cell membranes (protein transduction). The same region is required for the interaction with EP300, PCAF, EIF2AK2 and KDR.</text>
</comment>
<comment type="PTM">
    <text evidence="1">Asymmetrical arginine methylation by host PRMT6 seems to diminish the transactivation capacity of Tat and affects the interaction with host CCNT1.</text>
</comment>
<comment type="PTM">
    <text evidence="1">Acetylation by EP300, CREBBP, GCN5L2/GCN5 and PCAF regulates the transactivation activity of Tat. EP300-mediated acetylation of Lys-50 promotes dissociation of Tat from the TAR RNA through the competitive binding to PCAF's bromodomain. In addition, the non-acetylated Tat's N-terminus can also interact with PCAF. PCAF-mediated acetylation of Lys-28 enhances Tat's binding to CCNT1. Lys-50 is deacetylated by SIRT1.</text>
</comment>
<comment type="PTM">
    <text evidence="1">Polyubiquitination by host MDM2 does not target Tat to degradation, but activates its transactivation function and fosters interaction with CCNT1 and TAR RNA.</text>
</comment>
<comment type="PTM">
    <text evidence="1">Phosphorylated by EIF2AK2 on serine and threonine residues adjacent to the basic region important for TAR RNA binding and function. Phosphorylation of Tat by EIF2AK2 is dependent on the prior activation of EIF2AK2 by dsRNA.</text>
</comment>
<comment type="miscellaneous">
    <text evidence="1">This truncated variant has a premature stop codon. It may have arose as a consequence of tissue culture passaging.</text>
</comment>
<comment type="miscellaneous">
    <text evidence="1">HIV-1 lineages are divided in three main groups, M (for Major), O (for Outlier), and N (for New, or Non-M, Non-O). The vast majority of strains found worldwide belong to the group M. Group O seems to be endemic to and largely confined to Cameroon and neighboring countries in West Central Africa, where these viruses represent a small minority of HIV-1 strains. The group N is represented by a limited number of isolates from Cameroonian persons. The group M is further subdivided in 9 clades or subtypes (A to D, F to H, J and K).</text>
</comment>
<comment type="miscellaneous">
    <molecule>Isoform Short</molecule>
    <text evidence="3">Expressed in the late stage of the infection cycle, when unspliced viral RNAs are exported to the cytoplasm by the viral Rev protein.</text>
</comment>
<comment type="similarity">
    <text evidence="1">Belongs to the lentiviruses Tat family.</text>
</comment>
<evidence type="ECO:0000255" key="1">
    <source>
        <dbReference type="HAMAP-Rule" id="MF_04079"/>
    </source>
</evidence>
<evidence type="ECO:0000256" key="2">
    <source>
        <dbReference type="SAM" id="MobiDB-lite"/>
    </source>
</evidence>
<evidence type="ECO:0000305" key="3"/>
<organismHost>
    <name type="scientific">Homo sapiens</name>
    <name type="common">Human</name>
    <dbReference type="NCBI Taxonomy" id="9606"/>
</organismHost>
<keyword id="KW-0002">3D-structure</keyword>
<keyword id="KW-0007">Acetylation</keyword>
<keyword id="KW-0010">Activator</keyword>
<keyword id="KW-0014">AIDS</keyword>
<keyword id="KW-0025">Alternative splicing</keyword>
<keyword id="KW-0053">Apoptosis</keyword>
<keyword id="KW-1035">Host cytoplasm</keyword>
<keyword id="KW-1048">Host nucleus</keyword>
<keyword id="KW-0945">Host-virus interaction</keyword>
<keyword id="KW-1090">Inhibition of host innate immune response by virus</keyword>
<keyword id="KW-1114">Inhibition of host interferon signaling pathway by virus</keyword>
<keyword id="KW-0922">Interferon antiviral system evasion</keyword>
<keyword id="KW-1017">Isopeptide bond</keyword>
<keyword id="KW-0479">Metal-binding</keyword>
<keyword id="KW-0488">Methylation</keyword>
<keyword id="KW-1122">Modulation of host chromatin by virus</keyword>
<keyword id="KW-1126">Modulation of host PP1 activity by virus</keyword>
<keyword id="KW-0597">Phosphoprotein</keyword>
<keyword id="KW-0694">RNA-binding</keyword>
<keyword id="KW-0964">Secreted</keyword>
<keyword id="KW-0804">Transcription</keyword>
<keyword id="KW-0805">Transcription regulation</keyword>
<keyword id="KW-0832">Ubl conjugation</keyword>
<keyword id="KW-0899">Viral immunoevasion</keyword>
<keyword id="KW-0862">Zinc</keyword>
<feature type="chain" id="PRO_0000085339" description="Protein Tat">
    <location>
        <begin position="1"/>
        <end position="86"/>
    </location>
</feature>
<feature type="region of interest" description="Transactivation" evidence="1">
    <location>
        <begin position="1"/>
        <end position="48"/>
    </location>
</feature>
<feature type="region of interest" description="Interaction with human CREBBP" evidence="1">
    <location>
        <begin position="1"/>
        <end position="24"/>
    </location>
</feature>
<feature type="region of interest" description="Cysteine-rich" evidence="1">
    <location>
        <begin position="22"/>
        <end position="37"/>
    </location>
</feature>
<feature type="region of interest" description="Core" evidence="1">
    <location>
        <begin position="38"/>
        <end position="48"/>
    </location>
</feature>
<feature type="region of interest" description="Disordered" evidence="2">
    <location>
        <begin position="48"/>
        <end position="86"/>
    </location>
</feature>
<feature type="region of interest" description="Interaction with the host capping enzyme RNGTT" evidence="1">
    <location>
        <begin position="49"/>
        <end position="86"/>
    </location>
</feature>
<feature type="short sequence motif" description="Nuclear localization signal, RNA-binding (TAR), and protein transduction" evidence="1">
    <location>
        <begin position="49"/>
        <end position="57"/>
    </location>
</feature>
<feature type="short sequence motif" description="Cell attachment site" evidence="1">
    <location>
        <begin position="78"/>
        <end position="80"/>
    </location>
</feature>
<feature type="compositionally biased region" description="Basic residues" evidence="2">
    <location>
        <begin position="48"/>
        <end position="58"/>
    </location>
</feature>
<feature type="compositionally biased region" description="Polar residues" evidence="2">
    <location>
        <begin position="60"/>
        <end position="79"/>
    </location>
</feature>
<feature type="binding site" evidence="1">
    <location>
        <position position="22"/>
    </location>
    <ligand>
        <name>Zn(2+)</name>
        <dbReference type="ChEBI" id="CHEBI:29105"/>
        <label>1</label>
    </ligand>
</feature>
<feature type="binding site" evidence="1">
    <location>
        <position position="25"/>
    </location>
    <ligand>
        <name>Zn(2+)</name>
        <dbReference type="ChEBI" id="CHEBI:29105"/>
        <label>2</label>
    </ligand>
</feature>
<feature type="binding site" evidence="1">
    <location>
        <position position="27"/>
    </location>
    <ligand>
        <name>Zn(2+)</name>
        <dbReference type="ChEBI" id="CHEBI:29105"/>
        <label>2</label>
    </ligand>
</feature>
<feature type="binding site" evidence="1">
    <location>
        <position position="30"/>
    </location>
    <ligand>
        <name>Zn(2+)</name>
        <dbReference type="ChEBI" id="CHEBI:29105"/>
        <label>2</label>
    </ligand>
</feature>
<feature type="binding site" evidence="1">
    <location>
        <position position="33"/>
    </location>
    <ligand>
        <name>Zn(2+)</name>
        <dbReference type="ChEBI" id="CHEBI:29105"/>
        <label>1</label>
    </ligand>
</feature>
<feature type="binding site" evidence="1">
    <location>
        <position position="34"/>
    </location>
    <ligand>
        <name>Zn(2+)</name>
        <dbReference type="ChEBI" id="CHEBI:29105"/>
        <label>1</label>
    </ligand>
</feature>
<feature type="binding site" evidence="1">
    <location>
        <position position="37"/>
    </location>
    <ligand>
        <name>Zn(2+)</name>
        <dbReference type="ChEBI" id="CHEBI:29105"/>
        <label>1</label>
    </ligand>
</feature>
<feature type="site" description="Essential for Tat translocation through the endosomal membrane" evidence="1">
    <location>
        <position position="11"/>
    </location>
</feature>
<feature type="modified residue" description="N6-acetyllysine; by host PCAF" evidence="1">
    <location>
        <position position="28"/>
    </location>
</feature>
<feature type="modified residue" description="N6-acetyllysine; by host EP300 and GCN5L2" evidence="1">
    <location>
        <position position="50"/>
    </location>
</feature>
<feature type="modified residue" description="N6-acetyllysine; by host EP300 and GCN5L2" evidence="1">
    <location>
        <position position="51"/>
    </location>
</feature>
<feature type="modified residue" description="Asymmetric dimethylarginine; by host PRMT6" evidence="1">
    <location>
        <position position="52"/>
    </location>
</feature>
<feature type="modified residue" description="Asymmetric dimethylarginine; by host PRMT6" evidence="1">
    <location>
        <position position="53"/>
    </location>
</feature>
<feature type="cross-link" description="Glycyl lysine isopeptide (Lys-Gly) (interchain with G-Cter in ubiquitin)" evidence="1">
    <location>
        <position position="71"/>
    </location>
</feature>
<feature type="splice variant" id="VSP_022421" description="In isoform Short.">
    <location>
        <begin position="73"/>
        <end position="86"/>
    </location>
</feature>
<sequence length="86" mass="9758">MEPVDPRLEPWKHPGSQPKTACTNCYCKKCCFHCQVCFITKALGISYGRKKRRQRRRAPQGSQTHQVSLSKQPTSQSRGDPTGPKE</sequence>
<dbReference type="EMBL" id="M11840">
    <property type="protein sequence ID" value="AAA44999.1"/>
    <property type="molecule type" value="Genomic_RNA"/>
</dbReference>
<dbReference type="PIR" id="A04017">
    <property type="entry name" value="TNLJ12"/>
</dbReference>
<dbReference type="PDB" id="5SVZ">
    <property type="method" value="X-ray"/>
    <property type="resolution" value="2.00 A"/>
    <property type="chains" value="B=48-60"/>
</dbReference>
<dbReference type="PDBsum" id="5SVZ"/>
<dbReference type="SMR" id="P04326"/>
<dbReference type="IntAct" id="P04326">
    <property type="interactions" value="9"/>
</dbReference>
<dbReference type="MINT" id="P04326"/>
<dbReference type="BindingDB" id="P04326"/>
<dbReference type="ChEMBL" id="CHEMBL4609"/>
<dbReference type="GO" id="GO:0005576">
    <property type="term" value="C:extracellular region"/>
    <property type="evidence" value="ECO:0007669"/>
    <property type="project" value="UniProtKB-SubCell"/>
</dbReference>
<dbReference type="GO" id="GO:0030430">
    <property type="term" value="C:host cell cytoplasm"/>
    <property type="evidence" value="ECO:0007669"/>
    <property type="project" value="UniProtKB-SubCell"/>
</dbReference>
<dbReference type="GO" id="GO:0044196">
    <property type="term" value="C:host cell nucleolus"/>
    <property type="evidence" value="ECO:0007669"/>
    <property type="project" value="UniProtKB-SubCell"/>
</dbReference>
<dbReference type="GO" id="GO:0042805">
    <property type="term" value="F:actinin binding"/>
    <property type="evidence" value="ECO:0007669"/>
    <property type="project" value="UniProtKB-UniRule"/>
</dbReference>
<dbReference type="GO" id="GO:0030332">
    <property type="term" value="F:cyclin binding"/>
    <property type="evidence" value="ECO:0007669"/>
    <property type="project" value="UniProtKB-UniRule"/>
</dbReference>
<dbReference type="GO" id="GO:0046872">
    <property type="term" value="F:metal ion binding"/>
    <property type="evidence" value="ECO:0007669"/>
    <property type="project" value="UniProtKB-UniRule"/>
</dbReference>
<dbReference type="GO" id="GO:0019904">
    <property type="term" value="F:protein domain specific binding"/>
    <property type="evidence" value="ECO:0007669"/>
    <property type="project" value="UniProtKB-UniRule"/>
</dbReference>
<dbReference type="GO" id="GO:0004865">
    <property type="term" value="F:protein serine/threonine phosphatase inhibitor activity"/>
    <property type="evidence" value="ECO:0007669"/>
    <property type="project" value="UniProtKB-KW"/>
</dbReference>
<dbReference type="GO" id="GO:0001070">
    <property type="term" value="F:RNA-binding transcription regulator activity"/>
    <property type="evidence" value="ECO:0007669"/>
    <property type="project" value="UniProtKB-UniRule"/>
</dbReference>
<dbReference type="GO" id="GO:1990970">
    <property type="term" value="F:trans-activation response element binding"/>
    <property type="evidence" value="ECO:0007669"/>
    <property type="project" value="UniProtKB-UniRule"/>
</dbReference>
<dbReference type="GO" id="GO:0006351">
    <property type="term" value="P:DNA-templated transcription"/>
    <property type="evidence" value="ECO:0007669"/>
    <property type="project" value="UniProtKB-UniRule"/>
</dbReference>
<dbReference type="GO" id="GO:0032968">
    <property type="term" value="P:positive regulation of transcription elongation by RNA polymerase II"/>
    <property type="evidence" value="ECO:0007669"/>
    <property type="project" value="UniProtKB-UniRule"/>
</dbReference>
<dbReference type="GO" id="GO:0050434">
    <property type="term" value="P:positive regulation of viral transcription"/>
    <property type="evidence" value="ECO:0007669"/>
    <property type="project" value="UniProtKB-UniRule"/>
</dbReference>
<dbReference type="GO" id="GO:0039525">
    <property type="term" value="P:symbiont-mediated perturbation of host chromatin organization"/>
    <property type="evidence" value="ECO:0007669"/>
    <property type="project" value="UniProtKB-UniRule"/>
</dbReference>
<dbReference type="GO" id="GO:0052170">
    <property type="term" value="P:symbiont-mediated suppression of host innate immune response"/>
    <property type="evidence" value="ECO:0007669"/>
    <property type="project" value="UniProtKB-KW"/>
</dbReference>
<dbReference type="GO" id="GO:0039606">
    <property type="term" value="P:symbiont-mediated suppression of host translation initiation"/>
    <property type="evidence" value="ECO:0007669"/>
    <property type="project" value="UniProtKB-KW"/>
</dbReference>
<dbReference type="GO" id="GO:0039502">
    <property type="term" value="P:symbiont-mediated suppression of host type I interferon-mediated signaling pathway"/>
    <property type="evidence" value="ECO:0007669"/>
    <property type="project" value="UniProtKB-UniRule"/>
</dbReference>
<dbReference type="FunFam" id="4.10.20.10:FF:000001">
    <property type="entry name" value="Protein Tat"/>
    <property type="match status" value="1"/>
</dbReference>
<dbReference type="Gene3D" id="4.10.20.10">
    <property type="entry name" value="Tat domain"/>
    <property type="match status" value="1"/>
</dbReference>
<dbReference type="HAMAP" id="MF_04079">
    <property type="entry name" value="HIV_TAT"/>
    <property type="match status" value="1"/>
</dbReference>
<dbReference type="InterPro" id="IPR001831">
    <property type="entry name" value="IV_Tat"/>
</dbReference>
<dbReference type="InterPro" id="IPR036963">
    <property type="entry name" value="Tat_dom_sf"/>
</dbReference>
<dbReference type="Pfam" id="PF00539">
    <property type="entry name" value="Tat"/>
    <property type="match status" value="1"/>
</dbReference>
<dbReference type="PRINTS" id="PR00055">
    <property type="entry name" value="HIVTATDOMAIN"/>
</dbReference>
<reference key="1">
    <citation type="journal article" date="1986" name="Proc. Natl. Acad. Sci. U.S.A.">
        <title>Three novel genes of human T-lymphotropic virus type III: immune reactivity of their products with sera from acquired immune deficiency syndrome patients.</title>
        <authorList>
            <person name="Arya S.K."/>
            <person name="Gallo R.C."/>
        </authorList>
    </citation>
    <scope>NUCLEOTIDE SEQUENCE [GENOMIC RNA]</scope>
</reference>
<reference key="2">
    <citation type="journal article" date="2005" name="Microbes Infect.">
        <title>Decoding Tat: the biology of HIV Tat posttranslational modifications.</title>
        <authorList>
            <person name="Hetzer C."/>
            <person name="Dormeyer W."/>
            <person name="Schnolzer M."/>
            <person name="Ott M."/>
        </authorList>
    </citation>
    <scope>REVIEW</scope>
    <scope>ALTERNATIVE SPLICING</scope>
</reference>
<reference key="3">
    <citation type="journal article" date="2006" name="Front. Biosci.">
        <title>The multiple functions of HIV-1 Tat: proliferation versus apoptosis.</title>
        <authorList>
            <person name="Peruzzi F."/>
        </authorList>
    </citation>
    <scope>REVIEW</scope>
</reference>
<reference key="4">
    <citation type="journal article" date="2006" name="Microbes Infect.">
        <title>HIV tat and neurotoxicity.</title>
        <authorList>
            <person name="King J.E."/>
            <person name="Eugenin E.A."/>
            <person name="Buckner C.M."/>
            <person name="Berman J.W."/>
        </authorList>
    </citation>
    <scope>REVIEW</scope>
</reference>